<organism>
    <name type="scientific">Shewanella baltica (strain OS155 / ATCC BAA-1091)</name>
    <dbReference type="NCBI Taxonomy" id="325240"/>
    <lineage>
        <taxon>Bacteria</taxon>
        <taxon>Pseudomonadati</taxon>
        <taxon>Pseudomonadota</taxon>
        <taxon>Gammaproteobacteria</taxon>
        <taxon>Alteromonadales</taxon>
        <taxon>Shewanellaceae</taxon>
        <taxon>Shewanella</taxon>
    </lineage>
</organism>
<protein>
    <recommendedName>
        <fullName evidence="1">Small ribosomal subunit protein bS21</fullName>
    </recommendedName>
    <alternativeName>
        <fullName evidence="2">30S ribosomal protein S21</fullName>
    </alternativeName>
</protein>
<evidence type="ECO:0000255" key="1">
    <source>
        <dbReference type="HAMAP-Rule" id="MF_00358"/>
    </source>
</evidence>
<evidence type="ECO:0000305" key="2"/>
<gene>
    <name evidence="1" type="primary">rpsU</name>
    <name type="ordered locus">Sbal_1147</name>
</gene>
<proteinExistence type="inferred from homology"/>
<reference key="1">
    <citation type="submission" date="2007-02" db="EMBL/GenBank/DDBJ databases">
        <title>Complete sequence of chromosome of Shewanella baltica OS155.</title>
        <authorList>
            <consortium name="US DOE Joint Genome Institute"/>
            <person name="Copeland A."/>
            <person name="Lucas S."/>
            <person name="Lapidus A."/>
            <person name="Barry K."/>
            <person name="Detter J.C."/>
            <person name="Glavina del Rio T."/>
            <person name="Hammon N."/>
            <person name="Israni S."/>
            <person name="Dalin E."/>
            <person name="Tice H."/>
            <person name="Pitluck S."/>
            <person name="Sims D.R."/>
            <person name="Brettin T."/>
            <person name="Bruce D."/>
            <person name="Han C."/>
            <person name="Tapia R."/>
            <person name="Brainard J."/>
            <person name="Schmutz J."/>
            <person name="Larimer F."/>
            <person name="Land M."/>
            <person name="Hauser L."/>
            <person name="Kyrpides N."/>
            <person name="Mikhailova N."/>
            <person name="Brettar I."/>
            <person name="Klappenbach J."/>
            <person name="Konstantinidis K."/>
            <person name="Rodrigues J."/>
            <person name="Tiedje J."/>
            <person name="Richardson P."/>
        </authorList>
    </citation>
    <scope>NUCLEOTIDE SEQUENCE [LARGE SCALE GENOMIC DNA]</scope>
    <source>
        <strain>OS155 / ATCC BAA-1091</strain>
    </source>
</reference>
<dbReference type="EMBL" id="CP000563">
    <property type="protein sequence ID" value="ABN60666.1"/>
    <property type="molecule type" value="Genomic_DNA"/>
</dbReference>
<dbReference type="RefSeq" id="WP_006080725.1">
    <property type="nucleotide sequence ID" value="NC_009052.1"/>
</dbReference>
<dbReference type="SMR" id="A3D1Q3"/>
<dbReference type="STRING" id="325240.Sbal_1147"/>
<dbReference type="GeneID" id="94729004"/>
<dbReference type="KEGG" id="sbl:Sbal_1147"/>
<dbReference type="HOGENOM" id="CLU_159258_1_0_6"/>
<dbReference type="OrthoDB" id="9799244at2"/>
<dbReference type="Proteomes" id="UP000001557">
    <property type="component" value="Chromosome"/>
</dbReference>
<dbReference type="GO" id="GO:1990904">
    <property type="term" value="C:ribonucleoprotein complex"/>
    <property type="evidence" value="ECO:0007669"/>
    <property type="project" value="UniProtKB-KW"/>
</dbReference>
<dbReference type="GO" id="GO:0005840">
    <property type="term" value="C:ribosome"/>
    <property type="evidence" value="ECO:0007669"/>
    <property type="project" value="UniProtKB-KW"/>
</dbReference>
<dbReference type="GO" id="GO:0003735">
    <property type="term" value="F:structural constituent of ribosome"/>
    <property type="evidence" value="ECO:0007669"/>
    <property type="project" value="InterPro"/>
</dbReference>
<dbReference type="GO" id="GO:0006412">
    <property type="term" value="P:translation"/>
    <property type="evidence" value="ECO:0007669"/>
    <property type="project" value="UniProtKB-UniRule"/>
</dbReference>
<dbReference type="Gene3D" id="1.20.5.1150">
    <property type="entry name" value="Ribosomal protein S8"/>
    <property type="match status" value="1"/>
</dbReference>
<dbReference type="HAMAP" id="MF_00358">
    <property type="entry name" value="Ribosomal_bS21"/>
    <property type="match status" value="1"/>
</dbReference>
<dbReference type="InterPro" id="IPR001911">
    <property type="entry name" value="Ribosomal_bS21"/>
</dbReference>
<dbReference type="InterPro" id="IPR018278">
    <property type="entry name" value="Ribosomal_bS21_CS"/>
</dbReference>
<dbReference type="InterPro" id="IPR038380">
    <property type="entry name" value="Ribosomal_bS21_sf"/>
</dbReference>
<dbReference type="NCBIfam" id="TIGR00030">
    <property type="entry name" value="S21p"/>
    <property type="match status" value="1"/>
</dbReference>
<dbReference type="PANTHER" id="PTHR21109">
    <property type="entry name" value="MITOCHONDRIAL 28S RIBOSOMAL PROTEIN S21"/>
    <property type="match status" value="1"/>
</dbReference>
<dbReference type="PANTHER" id="PTHR21109:SF22">
    <property type="entry name" value="SMALL RIBOSOMAL SUBUNIT PROTEIN BS21"/>
    <property type="match status" value="1"/>
</dbReference>
<dbReference type="Pfam" id="PF01165">
    <property type="entry name" value="Ribosomal_S21"/>
    <property type="match status" value="1"/>
</dbReference>
<dbReference type="PRINTS" id="PR00976">
    <property type="entry name" value="RIBOSOMALS21"/>
</dbReference>
<dbReference type="PROSITE" id="PS01181">
    <property type="entry name" value="RIBOSOMAL_S21"/>
    <property type="match status" value="1"/>
</dbReference>
<feature type="chain" id="PRO_1000005169" description="Small ribosomal subunit protein bS21">
    <location>
        <begin position="1"/>
        <end position="71"/>
    </location>
</feature>
<sequence length="71" mass="8345">MPIIKVRENEPFDVALRRFKRSCEKAGILADVRAREFYEKPTTARKRAKAAAVKRLAKKLSRENARRVRLY</sequence>
<comment type="similarity">
    <text evidence="1">Belongs to the bacterial ribosomal protein bS21 family.</text>
</comment>
<name>RS21_SHEB5</name>
<keyword id="KW-1185">Reference proteome</keyword>
<keyword id="KW-0687">Ribonucleoprotein</keyword>
<keyword id="KW-0689">Ribosomal protein</keyword>
<accession>A3D1Q3</accession>